<reference key="1">
    <citation type="journal article" date="2004" name="Proc. Natl. Acad. Sci. U.S.A.">
        <title>Complete genomes of two clinical Staphylococcus aureus strains: evidence for the rapid evolution of virulence and drug resistance.</title>
        <authorList>
            <person name="Holden M.T.G."/>
            <person name="Feil E.J."/>
            <person name="Lindsay J.A."/>
            <person name="Peacock S.J."/>
            <person name="Day N.P.J."/>
            <person name="Enright M.C."/>
            <person name="Foster T.J."/>
            <person name="Moore C.E."/>
            <person name="Hurst L."/>
            <person name="Atkin R."/>
            <person name="Barron A."/>
            <person name="Bason N."/>
            <person name="Bentley S.D."/>
            <person name="Chillingworth C."/>
            <person name="Chillingworth T."/>
            <person name="Churcher C."/>
            <person name="Clark L."/>
            <person name="Corton C."/>
            <person name="Cronin A."/>
            <person name="Doggett J."/>
            <person name="Dowd L."/>
            <person name="Feltwell T."/>
            <person name="Hance Z."/>
            <person name="Harris B."/>
            <person name="Hauser H."/>
            <person name="Holroyd S."/>
            <person name="Jagels K."/>
            <person name="James K.D."/>
            <person name="Lennard N."/>
            <person name="Line A."/>
            <person name="Mayes R."/>
            <person name="Moule S."/>
            <person name="Mungall K."/>
            <person name="Ormond D."/>
            <person name="Quail M.A."/>
            <person name="Rabbinowitsch E."/>
            <person name="Rutherford K.M."/>
            <person name="Sanders M."/>
            <person name="Sharp S."/>
            <person name="Simmonds M."/>
            <person name="Stevens K."/>
            <person name="Whitehead S."/>
            <person name="Barrell B.G."/>
            <person name="Spratt B.G."/>
            <person name="Parkhill J."/>
        </authorList>
    </citation>
    <scope>NUCLEOTIDE SEQUENCE [LARGE SCALE GENOMIC DNA]</scope>
    <source>
        <strain>MRSA252</strain>
    </source>
</reference>
<name>DHPS_STAAR</name>
<feature type="chain" id="PRO_0000168223" description="Dihydropteroate synthase">
    <location>
        <begin position="1"/>
        <end position="267"/>
    </location>
</feature>
<feature type="domain" description="Pterin-binding" evidence="4">
    <location>
        <begin position="1"/>
        <end position="251"/>
    </location>
</feature>
<feature type="binding site" evidence="3">
    <location>
        <position position="11"/>
    </location>
    <ligand>
        <name>Mg(2+)</name>
        <dbReference type="ChEBI" id="CHEBI:18420"/>
    </ligand>
</feature>
<feature type="binding site" evidence="2">
    <location>
        <position position="51"/>
    </location>
    <ligand>
        <name>(7,8-dihydropterin-6-yl)methyl diphosphate</name>
        <dbReference type="ChEBI" id="CHEBI:72950"/>
    </ligand>
</feature>
<feature type="binding site" evidence="2">
    <location>
        <position position="84"/>
    </location>
    <ligand>
        <name>(7,8-dihydropterin-6-yl)methyl diphosphate</name>
        <dbReference type="ChEBI" id="CHEBI:72950"/>
    </ligand>
</feature>
<feature type="binding site" evidence="2">
    <location>
        <position position="103"/>
    </location>
    <ligand>
        <name>(7,8-dihydropterin-6-yl)methyl diphosphate</name>
        <dbReference type="ChEBI" id="CHEBI:72950"/>
    </ligand>
</feature>
<feature type="binding site" evidence="2">
    <location>
        <position position="167"/>
    </location>
    <ligand>
        <name>(7,8-dihydropterin-6-yl)methyl diphosphate</name>
        <dbReference type="ChEBI" id="CHEBI:72950"/>
    </ligand>
</feature>
<feature type="binding site" evidence="2">
    <location>
        <position position="203"/>
    </location>
    <ligand>
        <name>(7,8-dihydropterin-6-yl)methyl diphosphate</name>
        <dbReference type="ChEBI" id="CHEBI:72950"/>
    </ligand>
</feature>
<feature type="binding site" evidence="2">
    <location>
        <begin position="239"/>
        <end position="241"/>
    </location>
    <ligand>
        <name>(7,8-dihydropterin-6-yl)methyl diphosphate</name>
        <dbReference type="ChEBI" id="CHEBI:72950"/>
    </ligand>
</feature>
<evidence type="ECO:0000250" key="1"/>
<evidence type="ECO:0000250" key="2">
    <source>
        <dbReference type="UniProtKB" id="P0AC13"/>
    </source>
</evidence>
<evidence type="ECO:0000250" key="3">
    <source>
        <dbReference type="UniProtKB" id="P9WND1"/>
    </source>
</evidence>
<evidence type="ECO:0000255" key="4">
    <source>
        <dbReference type="PROSITE-ProRule" id="PRU00334"/>
    </source>
</evidence>
<evidence type="ECO:0000305" key="5"/>
<protein>
    <recommendedName>
        <fullName>Dihydropteroate synthase</fullName>
        <shortName>DHPS</shortName>
        <ecNumber>2.5.1.15</ecNumber>
    </recommendedName>
    <alternativeName>
        <fullName>Dihydropteroate pyrophosphorylase</fullName>
    </alternativeName>
</protein>
<gene>
    <name type="primary">folP</name>
    <name type="ordered locus">SAR0515</name>
</gene>
<accession>Q6GJF7</accession>
<keyword id="KW-0289">Folate biosynthesis</keyword>
<keyword id="KW-0460">Magnesium</keyword>
<keyword id="KW-0479">Metal-binding</keyword>
<keyword id="KW-0808">Transferase</keyword>
<comment type="function">
    <text evidence="2">Catalyzes the condensation of para-aminobenzoate (pABA) with 6-hydroxymethyl-7,8-dihydropterin diphosphate (DHPt-PP) to form 7,8-dihydropteroate (H2Pte), the immediate precursor of folate derivatives.</text>
</comment>
<comment type="catalytic activity">
    <reaction evidence="2">
        <text>(7,8-dihydropterin-6-yl)methyl diphosphate + 4-aminobenzoate = 7,8-dihydropteroate + diphosphate</text>
        <dbReference type="Rhea" id="RHEA:19949"/>
        <dbReference type="ChEBI" id="CHEBI:17836"/>
        <dbReference type="ChEBI" id="CHEBI:17839"/>
        <dbReference type="ChEBI" id="CHEBI:33019"/>
        <dbReference type="ChEBI" id="CHEBI:72950"/>
        <dbReference type="EC" id="2.5.1.15"/>
    </reaction>
</comment>
<comment type="cofactor">
    <cofactor evidence="2">
        <name>Mg(2+)</name>
        <dbReference type="ChEBI" id="CHEBI:18420"/>
    </cofactor>
</comment>
<comment type="pathway">
    <text>Cofactor biosynthesis; tetrahydrofolate biosynthesis; 7,8-dihydrofolate from 2-amino-4-hydroxy-6-hydroxymethyl-7,8-dihydropteridine diphosphate and 4-aminobenzoate: step 1/2.</text>
</comment>
<comment type="subunit">
    <text evidence="1">Homodimer.</text>
</comment>
<comment type="similarity">
    <text evidence="5">Belongs to the DHPS family.</text>
</comment>
<sequence length="267" mass="29498">MTKTKIMGILNVTPDSFSDGGKFNNVESAVTRVKAMMDEGADIIDVGGVSTRPGHEMITVEEELNRVLPVVEAIVGFDVKISVDTFRSEVAEACLKLGVDIINDQWAGLYDHRMFQVVAKYDAEIVLMHNGNGNRDEPVVEEMLTSLLAQAHQAKIAGIPSNKIWLDPGIGFAKTRNEEAEVMARLDELVATEYPVLLATSRKRFTKEMMGYDTTPVERDEVTAATTAYGIMKGVRAVRVHNVELNAKLAKGIDFLKENENARHNFS</sequence>
<proteinExistence type="inferred from homology"/>
<dbReference type="EC" id="2.5.1.15"/>
<dbReference type="EMBL" id="BX571856">
    <property type="protein sequence ID" value="CAG39537.1"/>
    <property type="molecule type" value="Genomic_DNA"/>
</dbReference>
<dbReference type="RefSeq" id="WP_000167936.1">
    <property type="nucleotide sequence ID" value="NC_002952.2"/>
</dbReference>
<dbReference type="SMR" id="Q6GJF7"/>
<dbReference type="KEGG" id="sar:SAR0515"/>
<dbReference type="HOGENOM" id="CLU_008023_0_2_9"/>
<dbReference type="UniPathway" id="UPA00077">
    <property type="reaction ID" value="UER00156"/>
</dbReference>
<dbReference type="Proteomes" id="UP000000596">
    <property type="component" value="Chromosome"/>
</dbReference>
<dbReference type="GO" id="GO:0005829">
    <property type="term" value="C:cytosol"/>
    <property type="evidence" value="ECO:0007669"/>
    <property type="project" value="TreeGrafter"/>
</dbReference>
<dbReference type="GO" id="GO:0004156">
    <property type="term" value="F:dihydropteroate synthase activity"/>
    <property type="evidence" value="ECO:0007669"/>
    <property type="project" value="UniProtKB-EC"/>
</dbReference>
<dbReference type="GO" id="GO:0046872">
    <property type="term" value="F:metal ion binding"/>
    <property type="evidence" value="ECO:0007669"/>
    <property type="project" value="UniProtKB-KW"/>
</dbReference>
<dbReference type="GO" id="GO:0046656">
    <property type="term" value="P:folic acid biosynthetic process"/>
    <property type="evidence" value="ECO:0007669"/>
    <property type="project" value="UniProtKB-KW"/>
</dbReference>
<dbReference type="GO" id="GO:0046654">
    <property type="term" value="P:tetrahydrofolate biosynthetic process"/>
    <property type="evidence" value="ECO:0007669"/>
    <property type="project" value="UniProtKB-UniPathway"/>
</dbReference>
<dbReference type="CDD" id="cd00739">
    <property type="entry name" value="DHPS"/>
    <property type="match status" value="1"/>
</dbReference>
<dbReference type="FunFam" id="3.20.20.20:FF:000010">
    <property type="entry name" value="Dihydropteroate synthase"/>
    <property type="match status" value="1"/>
</dbReference>
<dbReference type="Gene3D" id="3.20.20.20">
    <property type="entry name" value="Dihydropteroate synthase-like"/>
    <property type="match status" value="1"/>
</dbReference>
<dbReference type="InterPro" id="IPR045031">
    <property type="entry name" value="DHP_synth-like"/>
</dbReference>
<dbReference type="InterPro" id="IPR006390">
    <property type="entry name" value="DHP_synth_dom"/>
</dbReference>
<dbReference type="InterPro" id="IPR011005">
    <property type="entry name" value="Dihydropteroate_synth-like_sf"/>
</dbReference>
<dbReference type="InterPro" id="IPR000489">
    <property type="entry name" value="Pterin-binding_dom"/>
</dbReference>
<dbReference type="NCBIfam" id="TIGR01496">
    <property type="entry name" value="DHPS"/>
    <property type="match status" value="1"/>
</dbReference>
<dbReference type="PANTHER" id="PTHR20941">
    <property type="entry name" value="FOLATE SYNTHESIS PROTEINS"/>
    <property type="match status" value="1"/>
</dbReference>
<dbReference type="PANTHER" id="PTHR20941:SF1">
    <property type="entry name" value="FOLIC ACID SYNTHESIS PROTEIN FOL1"/>
    <property type="match status" value="1"/>
</dbReference>
<dbReference type="Pfam" id="PF00809">
    <property type="entry name" value="Pterin_bind"/>
    <property type="match status" value="1"/>
</dbReference>
<dbReference type="SUPFAM" id="SSF51717">
    <property type="entry name" value="Dihydropteroate synthetase-like"/>
    <property type="match status" value="1"/>
</dbReference>
<dbReference type="PROSITE" id="PS00792">
    <property type="entry name" value="DHPS_1"/>
    <property type="match status" value="1"/>
</dbReference>
<dbReference type="PROSITE" id="PS00793">
    <property type="entry name" value="DHPS_2"/>
    <property type="match status" value="1"/>
</dbReference>
<dbReference type="PROSITE" id="PS50972">
    <property type="entry name" value="PTERIN_BINDING"/>
    <property type="match status" value="1"/>
</dbReference>
<organism>
    <name type="scientific">Staphylococcus aureus (strain MRSA252)</name>
    <dbReference type="NCBI Taxonomy" id="282458"/>
    <lineage>
        <taxon>Bacteria</taxon>
        <taxon>Bacillati</taxon>
        <taxon>Bacillota</taxon>
        <taxon>Bacilli</taxon>
        <taxon>Bacillales</taxon>
        <taxon>Staphylococcaceae</taxon>
        <taxon>Staphylococcus</taxon>
    </lineage>
</organism>